<evidence type="ECO:0000255" key="1"/>
<evidence type="ECO:0000255" key="2">
    <source>
        <dbReference type="PROSITE-ProRule" id="PRU00521"/>
    </source>
</evidence>
<evidence type="ECO:0000305" key="3"/>
<evidence type="ECO:0000312" key="4">
    <source>
        <dbReference type="MGI" id="MGI:1351316"/>
    </source>
</evidence>
<proteinExistence type="evidence at protein level"/>
<keyword id="KW-1003">Cell membrane</keyword>
<keyword id="KW-0903">Direct protein sequencing</keyword>
<keyword id="KW-1015">Disulfide bond</keyword>
<keyword id="KW-0297">G-protein coupled receptor</keyword>
<keyword id="KW-0325">Glycoprotein</keyword>
<keyword id="KW-0472">Membrane</keyword>
<keyword id="KW-0552">Olfaction</keyword>
<keyword id="KW-0675">Receptor</keyword>
<keyword id="KW-1185">Reference proteome</keyword>
<keyword id="KW-0716">Sensory transduction</keyword>
<keyword id="KW-0807">Transducer</keyword>
<keyword id="KW-0812">Transmembrane</keyword>
<keyword id="KW-1133">Transmembrane helix</keyword>
<accession>Q9QY00</accession>
<accession>A2ALD1</accession>
<accession>Q0VBG5</accession>
<organism>
    <name type="scientific">Mus musculus</name>
    <name type="common">Mouse</name>
    <dbReference type="NCBI Taxonomy" id="10090"/>
    <lineage>
        <taxon>Eukaryota</taxon>
        <taxon>Metazoa</taxon>
        <taxon>Chordata</taxon>
        <taxon>Craniata</taxon>
        <taxon>Vertebrata</taxon>
        <taxon>Euteleostomi</taxon>
        <taxon>Mammalia</taxon>
        <taxon>Eutheria</taxon>
        <taxon>Euarchontoglires</taxon>
        <taxon>Glires</taxon>
        <taxon>Rodentia</taxon>
        <taxon>Myomorpha</taxon>
        <taxon>Muroidea</taxon>
        <taxon>Muridae</taxon>
        <taxon>Murinae</taxon>
        <taxon>Mus</taxon>
        <taxon>Mus</taxon>
    </lineage>
</organism>
<reference key="1">
    <citation type="journal article" date="1999" name="Mamm. Genome">
        <title>Sequence and chromosomal localization of the mouse ortholog of the human olfactory receptor gene 912-93.</title>
        <authorList>
            <person name="Rouquier S."/>
            <person name="Stubbs L."/>
            <person name="Gaillard-Sanchez I."/>
            <person name="Giorgi D.G."/>
        </authorList>
    </citation>
    <scope>NUCLEOTIDE SEQUENCE [GENOMIC DNA]</scope>
</reference>
<reference key="2">
    <citation type="journal article" date="2002" name="Nat. Neurosci.">
        <title>The olfactory receptor gene superfamily of the mouse.</title>
        <authorList>
            <person name="Zhang X."/>
            <person name="Firestein S."/>
        </authorList>
    </citation>
    <scope>NUCLEOTIDE SEQUENCE [GENOMIC DNA]</scope>
</reference>
<reference key="3">
    <citation type="journal article" date="2002" name="Hum. Mol. Genet.">
        <title>Different evolutionary processes shaped the mouse and human olfactory receptor gene families.</title>
        <authorList>
            <person name="Young J.M."/>
            <person name="Friedman C."/>
            <person name="Williams E.M."/>
            <person name="Ross J.A."/>
            <person name="Tonnes-Priddy L."/>
            <person name="Trask B.J."/>
        </authorList>
    </citation>
    <scope>NUCLEOTIDE SEQUENCE [GENOMIC DNA]</scope>
</reference>
<reference key="4">
    <citation type="journal article" date="2002" name="Hum. Mol. Genet.">
        <authorList>
            <person name="Young J.M."/>
            <person name="Friedman C."/>
            <person name="Williams E.M."/>
            <person name="Ross J.A."/>
            <person name="Tonnes-Priddy L."/>
            <person name="Trask B.J."/>
        </authorList>
    </citation>
    <scope>ERRATUM OF PUBMED:11875048</scope>
</reference>
<reference key="5">
    <citation type="journal article" date="2009" name="PLoS Biol.">
        <title>Lineage-specific biology revealed by a finished genome assembly of the mouse.</title>
        <authorList>
            <person name="Church D.M."/>
            <person name="Goodstadt L."/>
            <person name="Hillier L.W."/>
            <person name="Zody M.C."/>
            <person name="Goldstein S."/>
            <person name="She X."/>
            <person name="Bult C.J."/>
            <person name="Agarwala R."/>
            <person name="Cherry J.L."/>
            <person name="DiCuccio M."/>
            <person name="Hlavina W."/>
            <person name="Kapustin Y."/>
            <person name="Meric P."/>
            <person name="Maglott D."/>
            <person name="Birtle Z."/>
            <person name="Marques A.C."/>
            <person name="Graves T."/>
            <person name="Zhou S."/>
            <person name="Teague B."/>
            <person name="Potamousis K."/>
            <person name="Churas C."/>
            <person name="Place M."/>
            <person name="Herschleb J."/>
            <person name="Runnheim R."/>
            <person name="Forrest D."/>
            <person name="Amos-Landgraf J."/>
            <person name="Schwartz D.C."/>
            <person name="Cheng Z."/>
            <person name="Lindblad-Toh K."/>
            <person name="Eichler E.E."/>
            <person name="Ponting C.P."/>
        </authorList>
    </citation>
    <scope>NUCLEOTIDE SEQUENCE [LARGE SCALE GENOMIC DNA]</scope>
    <source>
        <strain>C57BL/6J</strain>
    </source>
</reference>
<reference key="6">
    <citation type="journal article" date="2004" name="Genome Res.">
        <title>The status, quality, and expansion of the NIH full-length cDNA project: the Mammalian Gene Collection (MGC).</title>
        <authorList>
            <consortium name="The MGC Project Team"/>
        </authorList>
    </citation>
    <scope>NUCLEOTIDE SEQUENCE [LARGE SCALE MRNA]</scope>
    <source>
        <tissue>Brain</tissue>
    </source>
</reference>
<reference key="7">
    <citation type="submission" date="2007-04" db="UniProtKB">
        <authorList>
            <person name="Lubec G."/>
            <person name="Kang S.U."/>
        </authorList>
    </citation>
    <scope>PROTEIN SEQUENCE OF 228-236</scope>
    <scope>IDENTIFICATION BY MASS SPECTROMETRY</scope>
    <source>
        <strain>C57BL/6J</strain>
        <tissue>Brain</tissue>
    </source>
</reference>
<gene>
    <name evidence="4" type="primary">Or5g26</name>
    <name evidence="4" type="synonym">Mor175-1</name>
    <name evidence="4" type="synonym">Olfr154</name>
    <name evidence="4" type="synonym">Olfr4-3</name>
    <name type="synonym">Or912-93</name>
    <name evidence="4" type="synonym">Or93</name>
</gene>
<comment type="function">
    <text>Potential odorant receptor.</text>
</comment>
<comment type="subcellular location">
    <subcellularLocation>
        <location evidence="3">Cell membrane</location>
        <topology evidence="1">Multi-pass membrane protein</topology>
    </subcellularLocation>
</comment>
<comment type="similarity">
    <text evidence="2">Belongs to the G-protein coupled receptor 1 family.</text>
</comment>
<name>O5G26_MOUSE</name>
<dbReference type="EMBL" id="AF146372">
    <property type="protein sequence ID" value="AAF20365.1"/>
    <property type="molecule type" value="Genomic_DNA"/>
</dbReference>
<dbReference type="EMBL" id="AY073523">
    <property type="protein sequence ID" value="AAL61186.1"/>
    <property type="molecule type" value="Genomic_DNA"/>
</dbReference>
<dbReference type="EMBL" id="AY318199">
    <property type="protein sequence ID" value="AAP71458.1"/>
    <property type="molecule type" value="Genomic_DNA"/>
</dbReference>
<dbReference type="EMBL" id="AL773585">
    <property type="status" value="NOT_ANNOTATED_CDS"/>
    <property type="molecule type" value="Genomic_DNA"/>
</dbReference>
<dbReference type="EMBL" id="BC120642">
    <property type="protein sequence ID" value="AAI20643.1"/>
    <property type="molecule type" value="mRNA"/>
</dbReference>
<dbReference type="EMBL" id="BC120644">
    <property type="protein sequence ID" value="AAI20645.1"/>
    <property type="molecule type" value="mRNA"/>
</dbReference>
<dbReference type="CCDS" id="CCDS16213.1"/>
<dbReference type="RefSeq" id="NP_038756.2">
    <property type="nucleotide sequence ID" value="NM_013728.2"/>
</dbReference>
<dbReference type="SMR" id="Q9QY00"/>
<dbReference type="FunCoup" id="Q9QY00">
    <property type="interactions" value="1152"/>
</dbReference>
<dbReference type="STRING" id="10090.ENSMUSP00000097502"/>
<dbReference type="GlyCosmos" id="Q9QY00">
    <property type="glycosylation" value="1 site, No reported glycans"/>
</dbReference>
<dbReference type="GlyGen" id="Q9QY00">
    <property type="glycosylation" value="1 site"/>
</dbReference>
<dbReference type="PaxDb" id="10090-ENSMUSP00000097502"/>
<dbReference type="DNASU" id="27216"/>
<dbReference type="Ensembl" id="ENSMUST00000099918.5">
    <property type="protein sequence ID" value="ENSMUSP00000097502.3"/>
    <property type="gene ID" value="ENSMUSG00000075212.6"/>
</dbReference>
<dbReference type="GeneID" id="27216"/>
<dbReference type="KEGG" id="mmu:27216"/>
<dbReference type="UCSC" id="uc008kko.2">
    <property type="organism name" value="mouse"/>
</dbReference>
<dbReference type="AGR" id="MGI:1351316"/>
<dbReference type="CTD" id="27216"/>
<dbReference type="MGI" id="MGI:1351316">
    <property type="gene designation" value="Or5g26"/>
</dbReference>
<dbReference type="VEuPathDB" id="HostDB:ENSMUSG00000075212"/>
<dbReference type="eggNOG" id="ENOG502RF13">
    <property type="taxonomic scope" value="Eukaryota"/>
</dbReference>
<dbReference type="GeneTree" id="ENSGT01120000271831"/>
<dbReference type="HOGENOM" id="CLU_012526_1_0_1"/>
<dbReference type="InParanoid" id="Q9QY00"/>
<dbReference type="OMA" id="STMIHIA"/>
<dbReference type="OrthoDB" id="9823959at2759"/>
<dbReference type="PhylomeDB" id="Q9QY00"/>
<dbReference type="TreeFam" id="TF352753"/>
<dbReference type="BioGRID-ORCS" id="27216">
    <property type="hits" value="0 hits in 49 CRISPR screens"/>
</dbReference>
<dbReference type="PRO" id="PR:Q9QY00"/>
<dbReference type="Proteomes" id="UP000000589">
    <property type="component" value="Chromosome 2"/>
</dbReference>
<dbReference type="RNAct" id="Q9QY00">
    <property type="molecule type" value="protein"/>
</dbReference>
<dbReference type="Bgee" id="ENSMUSG00000075212">
    <property type="expression patterns" value="Expressed in olfactory epithelium"/>
</dbReference>
<dbReference type="GO" id="GO:0016020">
    <property type="term" value="C:membrane"/>
    <property type="evidence" value="ECO:0000247"/>
    <property type="project" value="MGI"/>
</dbReference>
<dbReference type="GO" id="GO:0005886">
    <property type="term" value="C:plasma membrane"/>
    <property type="evidence" value="ECO:0007669"/>
    <property type="project" value="UniProtKB-SubCell"/>
</dbReference>
<dbReference type="GO" id="GO:0004930">
    <property type="term" value="F:G protein-coupled receptor activity"/>
    <property type="evidence" value="ECO:0007669"/>
    <property type="project" value="UniProtKB-KW"/>
</dbReference>
<dbReference type="GO" id="GO:0004984">
    <property type="term" value="F:olfactory receptor activity"/>
    <property type="evidence" value="ECO:0000247"/>
    <property type="project" value="MGI"/>
</dbReference>
<dbReference type="GO" id="GO:0007186">
    <property type="term" value="P:G protein-coupled receptor signaling pathway"/>
    <property type="evidence" value="ECO:0000247"/>
    <property type="project" value="MGI"/>
</dbReference>
<dbReference type="GO" id="GO:0007608">
    <property type="term" value="P:sensory perception of smell"/>
    <property type="evidence" value="ECO:0000247"/>
    <property type="project" value="MGI"/>
</dbReference>
<dbReference type="CDD" id="cd15414">
    <property type="entry name" value="7tmA_OR5G-like"/>
    <property type="match status" value="1"/>
</dbReference>
<dbReference type="FunFam" id="1.20.1070.10:FF:000003">
    <property type="entry name" value="Olfactory receptor"/>
    <property type="match status" value="1"/>
</dbReference>
<dbReference type="Gene3D" id="1.20.1070.10">
    <property type="entry name" value="Rhodopsin 7-helix transmembrane proteins"/>
    <property type="match status" value="1"/>
</dbReference>
<dbReference type="InterPro" id="IPR000276">
    <property type="entry name" value="GPCR_Rhodpsn"/>
</dbReference>
<dbReference type="InterPro" id="IPR017452">
    <property type="entry name" value="GPCR_Rhodpsn_7TM"/>
</dbReference>
<dbReference type="InterPro" id="IPR000725">
    <property type="entry name" value="Olfact_rcpt"/>
</dbReference>
<dbReference type="PANTHER" id="PTHR48018">
    <property type="entry name" value="OLFACTORY RECEPTOR"/>
    <property type="match status" value="1"/>
</dbReference>
<dbReference type="Pfam" id="PF13853">
    <property type="entry name" value="7tm_4"/>
    <property type="match status" value="1"/>
</dbReference>
<dbReference type="PRINTS" id="PR00237">
    <property type="entry name" value="GPCRRHODOPSN"/>
</dbReference>
<dbReference type="PRINTS" id="PR00245">
    <property type="entry name" value="OLFACTORYR"/>
</dbReference>
<dbReference type="SUPFAM" id="SSF81321">
    <property type="entry name" value="Family A G protein-coupled receptor-like"/>
    <property type="match status" value="1"/>
</dbReference>
<dbReference type="PROSITE" id="PS00237">
    <property type="entry name" value="G_PROTEIN_RECEP_F1_1"/>
    <property type="match status" value="1"/>
</dbReference>
<dbReference type="PROSITE" id="PS50262">
    <property type="entry name" value="G_PROTEIN_RECEP_F1_2"/>
    <property type="match status" value="1"/>
</dbReference>
<protein>
    <recommendedName>
        <fullName evidence="3">Olfactory receptor 5G26</fullName>
    </recommendedName>
    <alternativeName>
        <fullName>Olfactory receptor 154</fullName>
    </alternativeName>
    <alternativeName>
        <fullName>Olfactory receptor 175-1</fullName>
    </alternativeName>
</protein>
<feature type="chain" id="PRO_0000150829" description="Olfactory receptor 5G26">
    <location>
        <begin position="1"/>
        <end position="318"/>
    </location>
</feature>
<feature type="topological domain" description="Extracellular" evidence="1">
    <location>
        <begin position="1"/>
        <end position="28"/>
    </location>
</feature>
<feature type="transmembrane region" description="Helical; Name=1" evidence="1">
    <location>
        <begin position="29"/>
        <end position="49"/>
    </location>
</feature>
<feature type="topological domain" description="Cytoplasmic" evidence="1">
    <location>
        <begin position="50"/>
        <end position="56"/>
    </location>
</feature>
<feature type="transmembrane region" description="Helical; Name=2" evidence="1">
    <location>
        <begin position="57"/>
        <end position="77"/>
    </location>
</feature>
<feature type="topological domain" description="Extracellular" evidence="1">
    <location>
        <begin position="78"/>
        <end position="93"/>
    </location>
</feature>
<feature type="transmembrane region" description="Helical; Name=3" evidence="1">
    <location>
        <begin position="94"/>
        <end position="114"/>
    </location>
</feature>
<feature type="topological domain" description="Cytoplasmic" evidence="1">
    <location>
        <begin position="115"/>
        <end position="144"/>
    </location>
</feature>
<feature type="transmembrane region" description="Helical; Name=4" evidence="1">
    <location>
        <begin position="145"/>
        <end position="165"/>
    </location>
</feature>
<feature type="topological domain" description="Extracellular" evidence="1">
    <location>
        <begin position="166"/>
        <end position="198"/>
    </location>
</feature>
<feature type="transmembrane region" description="Helical; Name=5" evidence="1">
    <location>
        <begin position="199"/>
        <end position="219"/>
    </location>
</feature>
<feature type="topological domain" description="Cytoplasmic" evidence="1">
    <location>
        <begin position="220"/>
        <end position="239"/>
    </location>
</feature>
<feature type="transmembrane region" description="Helical; Name=6" evidence="1">
    <location>
        <begin position="240"/>
        <end position="260"/>
    </location>
</feature>
<feature type="topological domain" description="Extracellular" evidence="1">
    <location>
        <begin position="261"/>
        <end position="271"/>
    </location>
</feature>
<feature type="transmembrane region" description="Helical; Name=7" evidence="1">
    <location>
        <begin position="272"/>
        <end position="292"/>
    </location>
</feature>
<feature type="topological domain" description="Cytoplasmic" evidence="1">
    <location>
        <begin position="293"/>
        <end position="318"/>
    </location>
</feature>
<feature type="glycosylation site" description="N-linked (GlcNAc...) asparagine" evidence="1">
    <location>
        <position position="5"/>
    </location>
</feature>
<feature type="disulfide bond" evidence="2">
    <location>
        <begin position="97"/>
        <end position="189"/>
    </location>
</feature>
<feature type="sequence conflict" description="In Ref. 1; AAF20365, 3; AAL61186/AAP71458 and 6; AAI20643/AAI20645." evidence="3" ref="1 3 6">
    <original>V</original>
    <variation>I</variation>
    <location>
        <position position="154"/>
    </location>
</feature>
<feature type="sequence conflict" description="In Ref. 1; AAF20365, 3; AAL61186/AAP71458 and 6; AAI20643/AAI20645." evidence="3" ref="1 3 6">
    <original>K</original>
    <variation>N</variation>
    <location>
        <position position="195"/>
    </location>
</feature>
<feature type="sequence conflict" description="In Ref. 1; AAF20365, 3; AAL61186 and 6; AAI20643/AAI20645." evidence="3" ref="1 3 6">
    <original>F</original>
    <variation>L</variation>
    <location>
        <position position="313"/>
    </location>
</feature>
<sequence>MMHRNQTVVTEFFFTGLTSSFHLQIVLFLTFLCVYLATLLGNLGMIILIHLDTRLHIPMYFFLSHLSFVDACSSSVISPKMLSDMFVDKKVISFLGCAIQLCLFSQFVVTECFLLASMAYDRYVAICKPLLYTLIMSQRVCVQLVIGPYSIGFVSTMVHIISAFVLPYCGPNLINHFFCDLLPVLSLACANTQMKKRLLFIVAGILGVFSGIIILVSYVYIAITILKISSADGRRKAFSTCSSHLTAVSILYGTLFFIYVRPSSSFSLDINKVVSLFYTTVIPMLNPFIYSLRNKEVKDALIRTFEKQFCYSFQDKIL</sequence>